<accession>Q8I1X7</accession>
<dbReference type="EMBL" id="AL844503">
    <property type="protein sequence ID" value="CAD49144.1"/>
    <property type="molecule type" value="Genomic_DNA"/>
</dbReference>
<dbReference type="RefSeq" id="XP_001351364.1">
    <property type="nucleotide sequence ID" value="XM_001351328.1"/>
</dbReference>
<dbReference type="SMR" id="Q8I1X7"/>
<dbReference type="FunCoup" id="Q8I1X7">
    <property type="interactions" value="3"/>
</dbReference>
<dbReference type="IntAct" id="Q8I1X7">
    <property type="interactions" value="2"/>
</dbReference>
<dbReference type="STRING" id="36329.Q8I1X7"/>
<dbReference type="PaxDb" id="5833-PFD0255w"/>
<dbReference type="EnsemblProtists" id="CAD49144">
    <property type="protein sequence ID" value="CAD49144"/>
    <property type="gene ID" value="PF3D7_0405200"/>
</dbReference>
<dbReference type="GeneID" id="812431"/>
<dbReference type="KEGG" id="pfa:PF3D7_0405200"/>
<dbReference type="VEuPathDB" id="PlasmoDB:PF3D7_0405200"/>
<dbReference type="HOGENOM" id="CLU_033873_0_0_1"/>
<dbReference type="InParanoid" id="Q8I1X7"/>
<dbReference type="OMA" id="NRIHIDQ"/>
<dbReference type="OrthoDB" id="359169at2759"/>
<dbReference type="PhylomeDB" id="Q8I1X7"/>
<dbReference type="Proteomes" id="UP000001450">
    <property type="component" value="Chromosome 4"/>
</dbReference>
<dbReference type="GO" id="GO:0031410">
    <property type="term" value="C:cytoplasmic vesicle"/>
    <property type="evidence" value="ECO:0007669"/>
    <property type="project" value="UniProtKB-KW"/>
</dbReference>
<dbReference type="GO" id="GO:0020002">
    <property type="term" value="C:host cell plasma membrane"/>
    <property type="evidence" value="ECO:0007669"/>
    <property type="project" value="UniProtKB-SubCell"/>
</dbReference>
<dbReference type="GO" id="GO:0005886">
    <property type="term" value="C:plasma membrane"/>
    <property type="evidence" value="ECO:0007669"/>
    <property type="project" value="UniProtKB-SubCell"/>
</dbReference>
<dbReference type="GO" id="GO:0033016">
    <property type="term" value="C:rhoptry membrane"/>
    <property type="evidence" value="ECO:0007669"/>
    <property type="project" value="UniProtKB-SubCell"/>
</dbReference>
<dbReference type="InterPro" id="IPR053336">
    <property type="entry name" value="Rhoptry_Surface_Assoc"/>
</dbReference>
<dbReference type="PANTHER" id="PTHR37320">
    <property type="entry name" value="AG-1 BLOOD STAGE MEMBRANE PROTEIN HOMOLOGUE"/>
    <property type="match status" value="1"/>
</dbReference>
<dbReference type="PANTHER" id="PTHR37320:SF1">
    <property type="entry name" value="RHOPTRY SURFACE PROTEIN CERLI2"/>
    <property type="match status" value="1"/>
</dbReference>
<name>CERI2_PLAF7</name>
<reference evidence="8" key="1">
    <citation type="journal article" date="2002" name="Nature">
        <title>Genome sequence of the human malaria parasite Plasmodium falciparum.</title>
        <authorList>
            <person name="Gardner M.J."/>
            <person name="Hall N."/>
            <person name="Fung E."/>
            <person name="White O."/>
            <person name="Berriman M."/>
            <person name="Hyman R.W."/>
            <person name="Carlton J.M."/>
            <person name="Pain A."/>
            <person name="Nelson K.E."/>
            <person name="Bowman S."/>
            <person name="Paulsen I.T."/>
            <person name="James K.D."/>
            <person name="Eisen J.A."/>
            <person name="Rutherford K.M."/>
            <person name="Salzberg S.L."/>
            <person name="Craig A."/>
            <person name="Kyes S."/>
            <person name="Chan M.-S."/>
            <person name="Nene V."/>
            <person name="Shallom S.J."/>
            <person name="Suh B."/>
            <person name="Peterson J."/>
            <person name="Angiuoli S."/>
            <person name="Pertea M."/>
            <person name="Allen J."/>
            <person name="Selengut J."/>
            <person name="Haft D."/>
            <person name="Mather M.W."/>
            <person name="Vaidya A.B."/>
            <person name="Martin D.M.A."/>
            <person name="Fairlamb A.H."/>
            <person name="Fraunholz M.J."/>
            <person name="Roos D.S."/>
            <person name="Ralph S.A."/>
            <person name="McFadden G.I."/>
            <person name="Cummings L.M."/>
            <person name="Subramanian G.M."/>
            <person name="Mungall C."/>
            <person name="Venter J.C."/>
            <person name="Carucci D.J."/>
            <person name="Hoffman S.L."/>
            <person name="Newbold C."/>
            <person name="Davis R.W."/>
            <person name="Fraser C.M."/>
            <person name="Barrell B.G."/>
        </authorList>
    </citation>
    <scope>NUCLEOTIDE SEQUENCE [LARGE SCALE GENOMIC DNA]</scope>
    <source>
        <strain evidence="8">3D7</strain>
    </source>
</reference>
<reference evidence="8" key="2">
    <citation type="journal article" date="2002" name="Nature">
        <title>Sequence of Plasmodium falciparum chromosomes 1, 3-9 and 13.</title>
        <authorList>
            <person name="Hall N."/>
            <person name="Pain A."/>
            <person name="Berriman M."/>
            <person name="Churcher C.M."/>
            <person name="Harris B."/>
            <person name="Harris D."/>
            <person name="Mungall K.L."/>
            <person name="Bowman S."/>
            <person name="Atkin R."/>
            <person name="Baker S."/>
            <person name="Barron A."/>
            <person name="Brooks K."/>
            <person name="Buckee C.O."/>
            <person name="Burrows C."/>
            <person name="Cherevach I."/>
            <person name="Chillingworth C."/>
            <person name="Chillingworth T."/>
            <person name="Christodoulou Z."/>
            <person name="Clark L."/>
            <person name="Clark R."/>
            <person name="Corton C."/>
            <person name="Cronin A."/>
            <person name="Davies R.M."/>
            <person name="Davis P."/>
            <person name="Dear P."/>
            <person name="Dearden F."/>
            <person name="Doggett J."/>
            <person name="Feltwell T."/>
            <person name="Goble A."/>
            <person name="Goodhead I."/>
            <person name="Gwilliam R."/>
            <person name="Hamlin N."/>
            <person name="Hance Z."/>
            <person name="Harper D."/>
            <person name="Hauser H."/>
            <person name="Hornsby T."/>
            <person name="Holroyd S."/>
            <person name="Horrocks P."/>
            <person name="Humphray S."/>
            <person name="Jagels K."/>
            <person name="James K.D."/>
            <person name="Johnson D."/>
            <person name="Kerhornou A."/>
            <person name="Knights A."/>
            <person name="Konfortov B."/>
            <person name="Kyes S."/>
            <person name="Larke N."/>
            <person name="Lawson D."/>
            <person name="Lennard N."/>
            <person name="Line A."/>
            <person name="Maddison M."/>
            <person name="Mclean J."/>
            <person name="Mooney P."/>
            <person name="Moule S."/>
            <person name="Murphy L."/>
            <person name="Oliver K."/>
            <person name="Ormond D."/>
            <person name="Price C."/>
            <person name="Quail M.A."/>
            <person name="Rabbinowitsch E."/>
            <person name="Rajandream M.A."/>
            <person name="Rutter S."/>
            <person name="Rutherford K.M."/>
            <person name="Sanders M."/>
            <person name="Simmonds M."/>
            <person name="Seeger K."/>
            <person name="Sharp S."/>
            <person name="Smith R."/>
            <person name="Squares R."/>
            <person name="Squares S."/>
            <person name="Stevens K."/>
            <person name="Taylor K."/>
            <person name="Tivey A."/>
            <person name="Unwin L."/>
            <person name="Whitehead S."/>
            <person name="Woodward J.R."/>
            <person name="Sulston J.E."/>
            <person name="Craig A."/>
            <person name="Newbold C."/>
            <person name="Barrell B.G."/>
        </authorList>
    </citation>
    <scope>NUCLEOTIDE SEQUENCE [LARGE SCALE GENOMIC DNA]</scope>
    <source>
        <strain evidence="8">3D7</strain>
    </source>
</reference>
<reference evidence="5" key="3">
    <citation type="journal article" date="2009" name="Parasitol. Res.">
        <title>Identification of a vaccine candidate antigen, PfMAg-1, from Plasmodium falciparum with monoclonal antibody M26-32.</title>
        <authorList>
            <person name="Gao Y.H."/>
            <person name="Li H.L."/>
            <person name="Lu Y."/>
            <person name="Gao F.M."/>
            <person name="Lin Y.H."/>
            <person name="Zhou H.C."/>
            <person name="Zhang L.H."/>
            <person name="Wang H."/>
        </authorList>
    </citation>
    <scope>SUBCELLULAR LOCATION</scope>
    <scope>DEVELOPMENTAL STAGE</scope>
    <scope>POLYMORPHISM</scope>
    <scope>BIOTECHNOLOGY</scope>
    <scope>REPEATS</scope>
</reference>
<reference evidence="5" key="4">
    <citation type="journal article" date="2022" name="Commun. Biol.">
        <title>Cell biological analysis reveals an essential role for Pfcerli2 in erythrocyte invasion by malaria parasites.</title>
        <authorList>
            <person name="Liffner B."/>
            <person name="Balbin J.M."/>
            <person name="Shami G.J."/>
            <person name="Siddiqui G."/>
            <person name="Strauss J."/>
            <person name="Froelich S."/>
            <person name="Heinemann G.K."/>
            <person name="Edwards E.M."/>
            <person name="Alder A."/>
            <person name="Wichers J.S."/>
            <person name="Creek D.J."/>
            <person name="Tilley L."/>
            <person name="Dixon M.W.A."/>
            <person name="Gilberger T.W."/>
            <person name="Wilson D.W."/>
        </authorList>
    </citation>
    <scope>FUNCTION</scope>
    <scope>SUBCELLULAR LOCATION</scope>
    <scope>DEVELOPMENTAL STAGE</scope>
    <scope>DISRUPTION PHENOTYPE</scope>
</reference>
<gene>
    <name evidence="4" type="primary">CERLI2</name>
    <name evidence="3" type="synonym">MAG-1</name>
    <name evidence="7" type="ORF">PF3D7_0405200</name>
</gene>
<evidence type="ECO:0000269" key="1">
    <source>
    </source>
</evidence>
<evidence type="ECO:0000269" key="2">
    <source>
    </source>
</evidence>
<evidence type="ECO:0000303" key="3">
    <source>
    </source>
</evidence>
<evidence type="ECO:0000303" key="4">
    <source>
    </source>
</evidence>
<evidence type="ECO:0000305" key="5"/>
<evidence type="ECO:0000305" key="6">
    <source>
    </source>
</evidence>
<evidence type="ECO:0000312" key="7">
    <source>
        <dbReference type="EMBL" id="CAD49144.1"/>
    </source>
</evidence>
<evidence type="ECO:0000312" key="8">
    <source>
        <dbReference type="Proteomes" id="UP000001450"/>
    </source>
</evidence>
<comment type="function">
    <text evidence="2">Plays an important role in rhoptry physiology and thus is essential for merozoite invasion of host erythrocytes.</text>
</comment>
<comment type="subcellular location">
    <subcellularLocation>
        <location evidence="2">Cytoplasmic vesicle</location>
        <location evidence="2">Secretory vesicle</location>
        <location evidence="2">Rhoptry membrane</location>
        <topology evidence="2">Peripheral membrane protein</topology>
        <orientation evidence="2">Cytoplasmic side</orientation>
    </subcellularLocation>
    <subcellularLocation>
        <location evidence="1">Cell membrane</location>
        <topology evidence="1">Peripheral membrane protein</topology>
    </subcellularLocation>
    <subcellularLocation>
        <location evidence="1">Host cell membrane</location>
        <topology evidence="1">Peripheral membrane protein</topology>
        <orientation evidence="1">Cytoplasmic side</orientation>
    </subcellularLocation>
    <text evidence="1 2">Localizes below the host erythrocyte cell membrane (PubMed:19777263). Localizes to the cell membrane of merozoites (PubMed:19777263). In merozoites, localizes to the cytosolic face of the rhoptry bulb membrane (PubMed:35140336).</text>
</comment>
<comment type="developmental stage">
    <text evidence="1">During parasite asexual blood stages, expressed in trophozoites and at the schizont stage (at protein level).</text>
</comment>
<comment type="polymorphism">
    <text evidence="1">The number of deca-peptide repeats in the C-terminus varies across P.falciparum strains (PubMed:19777263). Strain 3D7 has 12 copies; Dd2 has 14 copies; Hondura-1, FCC1, FCC2, and T996 have 17 copies; and strain D10 and FCR3 have 19 copies (PubMed:19777263).</text>
</comment>
<comment type="disruption phenotype">
    <text evidence="2">Impairs merozoite invasion of host erythrocytes at, or prior to, the formation of the tight junction (PubMed:35140336). Merozoite development and egress following schizont rupture are not affected (PubMed:35140336). Inhibits rhoptry bulb RAP1 processing but not secretion of rhoptry neck proteins RH4 and RON4 (PubMed:35140336). Causes defects in rhoptry morphology which are narrower and more elongated (PubMed:35140336). No defect in microneme secretion (PubMed:35140336).</text>
</comment>
<comment type="biotechnology">
    <text evidence="1">Antibodies against CERLI2 severely reduces parasitemia, suggesting that CERLI2 is a potential vaccine candidate.</text>
</comment>
<organism evidence="8">
    <name type="scientific">Plasmodium falciparum (isolate 3D7)</name>
    <dbReference type="NCBI Taxonomy" id="36329"/>
    <lineage>
        <taxon>Eukaryota</taxon>
        <taxon>Sar</taxon>
        <taxon>Alveolata</taxon>
        <taxon>Apicomplexa</taxon>
        <taxon>Aconoidasida</taxon>
        <taxon>Haemosporida</taxon>
        <taxon>Plasmodiidae</taxon>
        <taxon>Plasmodium</taxon>
        <taxon>Plasmodium (Laverania)</taxon>
    </lineage>
</organism>
<sequence length="579" mass="69103">MLGTKFILNIFKNKFNNLSTRFIKYVIKSYKRTCPHISDFEPFSSMYYYTGLHNYRTFYLLIKINEIFNINKYKQIYIIVNTDKYDFTTDDIETNKKNRIYLDQRVDIKIRQCDEVIRINLFTTKLTKKVHIGEIKIDINASIISKCFPKNEWFVCIKDGQEVCKVQLSFYKTQKYACPSECMFIHDGLEIWKDKSKSGSTKKIDINNIHKNFDDNDEHLAMIDIDTDINDISLIQKLKLISFVLEQEICVFDFYAYVLKYMYAKEIMGEWFLCFLCFKNNKDQEEINIETIIERNIHRDINIPMLNIQRIVVDKRNNTNANIIYTYQDEKYTLSIHSKKNLYYIIDAITIFTNDLKILKESFGDELEYRKNIIMKENTMKKLMGKRRLSSPRFRKNLPKSTHKMIKEMYDEQDCSHDVKESNTQFFENDMKTNEIKNDNIQTDEIKNDNIQTDEIKNDHIQTDEIKNDNIQTDEIKNDNIQTDEIKNDHIQTDEIKNDNIQTDEIKNDNIQTDEIKNDHIQTDEINNDHIQTDEIKNDHIQTDEIKNDHIQTDEIKNDINTSNEIFFKAQLENTIQNI</sequence>
<proteinExistence type="evidence at protein level"/>
<keyword id="KW-1003">Cell membrane</keyword>
<keyword id="KW-0968">Cytoplasmic vesicle</keyword>
<keyword id="KW-1032">Host cell membrane</keyword>
<keyword id="KW-1043">Host membrane</keyword>
<keyword id="KW-0472">Membrane</keyword>
<keyword id="KW-1185">Reference proteome</keyword>
<keyword id="KW-0677">Repeat</keyword>
<protein>
    <recommendedName>
        <fullName evidence="5">Rhoptry surface protein CERLI2</fullName>
    </recommendedName>
    <alternativeName>
        <fullName evidence="3">Ag-1 blood stage membrane protein homolog</fullName>
        <shortName evidence="3">Pfmag-1</shortName>
    </alternativeName>
    <alternativeName>
        <fullName evidence="4">Cytosolically exposed rhoptry leaflet interacting protein 2</fullName>
        <shortName evidence="4">PfCERLI2</shortName>
    </alternativeName>
</protein>
<feature type="chain" id="PRO_0000456208" description="Rhoptry surface protein CERLI2">
    <location>
        <begin position="1"/>
        <end position="579"/>
    </location>
</feature>
<feature type="domain" description="C2" evidence="6">
    <location>
        <begin position="52"/>
        <end position="84"/>
    </location>
</feature>
<feature type="repeat" description="1" evidence="1">
    <location>
        <begin position="442"/>
        <end position="451"/>
    </location>
</feature>
<feature type="repeat" description="2" evidence="1">
    <location>
        <begin position="452"/>
        <end position="461"/>
    </location>
</feature>
<feature type="repeat" description="3" evidence="1">
    <location>
        <begin position="462"/>
        <end position="471"/>
    </location>
</feature>
<feature type="repeat" description="4" evidence="1">
    <location>
        <begin position="472"/>
        <end position="481"/>
    </location>
</feature>
<feature type="repeat" description="5" evidence="1">
    <location>
        <begin position="482"/>
        <end position="491"/>
    </location>
</feature>
<feature type="repeat" description="6" evidence="1">
    <location>
        <begin position="492"/>
        <end position="501"/>
    </location>
</feature>
<feature type="repeat" description="7" evidence="1">
    <location>
        <begin position="502"/>
        <end position="511"/>
    </location>
</feature>
<feature type="repeat" description="9" evidence="1">
    <location>
        <begin position="522"/>
        <end position="531"/>
    </location>
</feature>
<feature type="repeat" description="10" evidence="1">
    <location>
        <begin position="532"/>
        <end position="541"/>
    </location>
</feature>
<feature type="repeat" description="11" evidence="1">
    <location>
        <begin position="542"/>
        <end position="551"/>
    </location>
</feature>
<feature type="repeat" description="12" evidence="1">
    <location>
        <begin position="552"/>
        <end position="561"/>
    </location>
</feature>
<feature type="region of interest" description="12 X 10 AA tandem repeat of Q-T-E-I-[K/N]-N-D-[H/N/I][I/N]" evidence="1">
    <location>
        <begin position="442"/>
        <end position="561"/>
    </location>
</feature>